<evidence type="ECO:0000255" key="1">
    <source>
        <dbReference type="HAMAP-Rule" id="MF_01309"/>
    </source>
</evidence>
<evidence type="ECO:0000305" key="2"/>
<organism>
    <name type="scientific">Shigella flexneri</name>
    <dbReference type="NCBI Taxonomy" id="623"/>
    <lineage>
        <taxon>Bacteria</taxon>
        <taxon>Pseudomonadati</taxon>
        <taxon>Pseudomonadota</taxon>
        <taxon>Gammaproteobacteria</taxon>
        <taxon>Enterobacterales</taxon>
        <taxon>Enterobacteriaceae</taxon>
        <taxon>Shigella</taxon>
    </lineage>
</organism>
<reference key="1">
    <citation type="journal article" date="2002" name="Nucleic Acids Res.">
        <title>Genome sequence of Shigella flexneri 2a: insights into pathogenicity through comparison with genomes of Escherichia coli K12 and O157.</title>
        <authorList>
            <person name="Jin Q."/>
            <person name="Yuan Z."/>
            <person name="Xu J."/>
            <person name="Wang Y."/>
            <person name="Shen Y."/>
            <person name="Lu W."/>
            <person name="Wang J."/>
            <person name="Liu H."/>
            <person name="Yang J."/>
            <person name="Yang F."/>
            <person name="Zhang X."/>
            <person name="Zhang J."/>
            <person name="Yang G."/>
            <person name="Wu H."/>
            <person name="Qu D."/>
            <person name="Dong J."/>
            <person name="Sun L."/>
            <person name="Xue Y."/>
            <person name="Zhao A."/>
            <person name="Gao Y."/>
            <person name="Zhu J."/>
            <person name="Kan B."/>
            <person name="Ding K."/>
            <person name="Chen S."/>
            <person name="Cheng H."/>
            <person name="Yao Z."/>
            <person name="He B."/>
            <person name="Chen R."/>
            <person name="Ma D."/>
            <person name="Qiang B."/>
            <person name="Wen Y."/>
            <person name="Hou Y."/>
            <person name="Yu J."/>
        </authorList>
    </citation>
    <scope>NUCLEOTIDE SEQUENCE [LARGE SCALE GENOMIC DNA]</scope>
    <source>
        <strain>301 / Serotype 2a</strain>
    </source>
</reference>
<reference key="2">
    <citation type="journal article" date="2003" name="Infect. Immun.">
        <title>Complete genome sequence and comparative genomics of Shigella flexneri serotype 2a strain 2457T.</title>
        <authorList>
            <person name="Wei J."/>
            <person name="Goldberg M.B."/>
            <person name="Burland V."/>
            <person name="Venkatesan M.M."/>
            <person name="Deng W."/>
            <person name="Fournier G."/>
            <person name="Mayhew G.F."/>
            <person name="Plunkett G. III"/>
            <person name="Rose D.J."/>
            <person name="Darling A."/>
            <person name="Mau B."/>
            <person name="Perna N.T."/>
            <person name="Payne S.M."/>
            <person name="Runyen-Janecky L.J."/>
            <person name="Zhou S."/>
            <person name="Schwartz D.C."/>
            <person name="Blattner F.R."/>
        </authorList>
    </citation>
    <scope>NUCLEOTIDE SEQUENCE [LARGE SCALE GENOMIC DNA]</scope>
    <source>
        <strain>ATCC 700930 / 2457T / Serotype 2a</strain>
    </source>
</reference>
<proteinExistence type="inferred from homology"/>
<comment type="function">
    <text evidence="1">Binds the lower part of the 30S subunit head. Binds mRNA in the 70S ribosome, positioning it for translation.</text>
</comment>
<comment type="subunit">
    <text evidence="1">Part of the 30S ribosomal subunit. Forms a tight complex with proteins S10 and S14.</text>
</comment>
<comment type="similarity">
    <text evidence="1">Belongs to the universal ribosomal protein uS3 family.</text>
</comment>
<name>RS3_SHIFL</name>
<gene>
    <name evidence="1" type="primary">rpsC</name>
    <name type="ordered locus">SF3346</name>
    <name type="ordered locus">S4416</name>
</gene>
<feature type="chain" id="PRO_0000130194" description="Small ribosomal subunit protein uS3">
    <location>
        <begin position="1"/>
        <end position="233"/>
    </location>
</feature>
<feature type="domain" description="KH type-2" evidence="1">
    <location>
        <begin position="28"/>
        <end position="96"/>
    </location>
</feature>
<feature type="sequence conflict" description="In Ref. 2; AAP19367." evidence="2" ref="2">
    <original>R</original>
    <variation>P</variation>
    <location>
        <position position="7"/>
    </location>
</feature>
<dbReference type="EMBL" id="AE005674">
    <property type="protein sequence ID" value="AAN44809.2"/>
    <property type="molecule type" value="Genomic_DNA"/>
</dbReference>
<dbReference type="EMBL" id="AE014073">
    <property type="protein sequence ID" value="AAP19367.1"/>
    <property type="molecule type" value="Genomic_DNA"/>
</dbReference>
<dbReference type="RefSeq" id="NP_709102.2">
    <property type="nucleotide sequence ID" value="NC_004337.2"/>
</dbReference>
<dbReference type="RefSeq" id="WP_000529950.1">
    <property type="nucleotide sequence ID" value="NZ_CP123365.1"/>
</dbReference>
<dbReference type="SMR" id="P59184"/>
<dbReference type="STRING" id="198214.SF3346"/>
<dbReference type="PaxDb" id="198214-SF3346"/>
<dbReference type="GeneID" id="1026985"/>
<dbReference type="KEGG" id="sfl:SF3346"/>
<dbReference type="KEGG" id="sfx:S4416"/>
<dbReference type="PATRIC" id="fig|198214.7.peg.3955"/>
<dbReference type="HOGENOM" id="CLU_058591_0_2_6"/>
<dbReference type="Proteomes" id="UP000001006">
    <property type="component" value="Chromosome"/>
</dbReference>
<dbReference type="Proteomes" id="UP000002673">
    <property type="component" value="Chromosome"/>
</dbReference>
<dbReference type="GO" id="GO:0022627">
    <property type="term" value="C:cytosolic small ribosomal subunit"/>
    <property type="evidence" value="ECO:0007669"/>
    <property type="project" value="TreeGrafter"/>
</dbReference>
<dbReference type="GO" id="GO:0003729">
    <property type="term" value="F:mRNA binding"/>
    <property type="evidence" value="ECO:0007669"/>
    <property type="project" value="UniProtKB-UniRule"/>
</dbReference>
<dbReference type="GO" id="GO:0019843">
    <property type="term" value="F:rRNA binding"/>
    <property type="evidence" value="ECO:0007669"/>
    <property type="project" value="UniProtKB-UniRule"/>
</dbReference>
<dbReference type="GO" id="GO:0003735">
    <property type="term" value="F:structural constituent of ribosome"/>
    <property type="evidence" value="ECO:0007669"/>
    <property type="project" value="InterPro"/>
</dbReference>
<dbReference type="GO" id="GO:0006412">
    <property type="term" value="P:translation"/>
    <property type="evidence" value="ECO:0007669"/>
    <property type="project" value="UniProtKB-UniRule"/>
</dbReference>
<dbReference type="CDD" id="cd02412">
    <property type="entry name" value="KH-II_30S_S3"/>
    <property type="match status" value="1"/>
</dbReference>
<dbReference type="FunFam" id="3.30.1140.32:FF:000001">
    <property type="entry name" value="30S ribosomal protein S3"/>
    <property type="match status" value="1"/>
</dbReference>
<dbReference type="FunFam" id="3.30.300.20:FF:000001">
    <property type="entry name" value="30S ribosomal protein S3"/>
    <property type="match status" value="1"/>
</dbReference>
<dbReference type="Gene3D" id="3.30.300.20">
    <property type="match status" value="1"/>
</dbReference>
<dbReference type="Gene3D" id="3.30.1140.32">
    <property type="entry name" value="Ribosomal protein S3, C-terminal domain"/>
    <property type="match status" value="1"/>
</dbReference>
<dbReference type="HAMAP" id="MF_01309_B">
    <property type="entry name" value="Ribosomal_uS3_B"/>
    <property type="match status" value="1"/>
</dbReference>
<dbReference type="InterPro" id="IPR004087">
    <property type="entry name" value="KH_dom"/>
</dbReference>
<dbReference type="InterPro" id="IPR015946">
    <property type="entry name" value="KH_dom-like_a/b"/>
</dbReference>
<dbReference type="InterPro" id="IPR004044">
    <property type="entry name" value="KH_dom_type_2"/>
</dbReference>
<dbReference type="InterPro" id="IPR009019">
    <property type="entry name" value="KH_sf_prok-type"/>
</dbReference>
<dbReference type="InterPro" id="IPR036419">
    <property type="entry name" value="Ribosomal_S3_C_sf"/>
</dbReference>
<dbReference type="InterPro" id="IPR005704">
    <property type="entry name" value="Ribosomal_uS3_bac-typ"/>
</dbReference>
<dbReference type="InterPro" id="IPR001351">
    <property type="entry name" value="Ribosomal_uS3_C"/>
</dbReference>
<dbReference type="InterPro" id="IPR018280">
    <property type="entry name" value="Ribosomal_uS3_CS"/>
</dbReference>
<dbReference type="NCBIfam" id="TIGR01009">
    <property type="entry name" value="rpsC_bact"/>
    <property type="match status" value="1"/>
</dbReference>
<dbReference type="PANTHER" id="PTHR11760">
    <property type="entry name" value="30S/40S RIBOSOMAL PROTEIN S3"/>
    <property type="match status" value="1"/>
</dbReference>
<dbReference type="PANTHER" id="PTHR11760:SF19">
    <property type="entry name" value="SMALL RIBOSOMAL SUBUNIT PROTEIN US3C"/>
    <property type="match status" value="1"/>
</dbReference>
<dbReference type="Pfam" id="PF07650">
    <property type="entry name" value="KH_2"/>
    <property type="match status" value="1"/>
</dbReference>
<dbReference type="Pfam" id="PF00189">
    <property type="entry name" value="Ribosomal_S3_C"/>
    <property type="match status" value="1"/>
</dbReference>
<dbReference type="SMART" id="SM00322">
    <property type="entry name" value="KH"/>
    <property type="match status" value="1"/>
</dbReference>
<dbReference type="SUPFAM" id="SSF54814">
    <property type="entry name" value="Prokaryotic type KH domain (KH-domain type II)"/>
    <property type="match status" value="1"/>
</dbReference>
<dbReference type="SUPFAM" id="SSF54821">
    <property type="entry name" value="Ribosomal protein S3 C-terminal domain"/>
    <property type="match status" value="1"/>
</dbReference>
<dbReference type="PROSITE" id="PS50823">
    <property type="entry name" value="KH_TYPE_2"/>
    <property type="match status" value="1"/>
</dbReference>
<dbReference type="PROSITE" id="PS00548">
    <property type="entry name" value="RIBOSOMAL_S3"/>
    <property type="match status" value="1"/>
</dbReference>
<sequence length="233" mass="26042">MGQKVHRNGIRLGIVKPWNSTWFANTKEFADNLDSDFKVRQYLTKELAKASVSRIVIERPAKSIRVTIHTARPGIVIGKKGEDVEKLRKVVADIAGVPAQINIAEVRKPELDAKLVADSITSQLERRVMFRRAMKRAVQNAMRLGAKGIKVEVSGRLGGAEIARTEWYREGRVPLHTLRADIDYNTSEAHTTYGVIGVKVWIFKGEILGGMAAVEQPEKPAAQPKKQQRKGRK</sequence>
<accession>P59184</accession>
<protein>
    <recommendedName>
        <fullName evidence="1">Small ribosomal subunit protein uS3</fullName>
    </recommendedName>
    <alternativeName>
        <fullName evidence="2">30S ribosomal protein S3</fullName>
    </alternativeName>
</protein>
<keyword id="KW-1185">Reference proteome</keyword>
<keyword id="KW-0687">Ribonucleoprotein</keyword>
<keyword id="KW-0689">Ribosomal protein</keyword>
<keyword id="KW-0694">RNA-binding</keyword>
<keyword id="KW-0699">rRNA-binding</keyword>